<accession>P00545</accession>
<accession>Q86597</accession>
<feature type="chain" id="PRO_0000155209" description="Tyrosine-protein kinase transforming protein fms">
    <location>
        <begin position="1"/>
        <end position="978"/>
    </location>
</feature>
<feature type="topological domain" description="Extracellular" evidence="2">
    <location>
        <begin position="1"/>
        <end position="543"/>
    </location>
</feature>
<feature type="transmembrane region" description="Helical" evidence="2">
    <location>
        <begin position="544"/>
        <end position="568"/>
    </location>
</feature>
<feature type="topological domain" description="Cytoplasmic" evidence="2">
    <location>
        <begin position="569"/>
        <end position="978"/>
    </location>
</feature>
<feature type="domain" description="Ig-like C2-type 1">
    <location>
        <begin position="55"/>
        <end position="134"/>
    </location>
</feature>
<feature type="domain" description="Ig-like C2-type 2">
    <location>
        <begin position="141"/>
        <end position="231"/>
    </location>
</feature>
<feature type="domain" description="Ig-like C2-type 3">
    <location>
        <begin position="236"/>
        <end position="331"/>
    </location>
</feature>
<feature type="domain" description="Ig-like C2-type 4">
    <location>
        <begin position="333"/>
        <end position="431"/>
    </location>
</feature>
<feature type="domain" description="Ig-like C2-type 5">
    <location>
        <begin position="434"/>
        <end position="533"/>
    </location>
</feature>
<feature type="domain" description="Protein kinase" evidence="4">
    <location>
        <begin position="613"/>
        <end position="942"/>
    </location>
</feature>
<feature type="region of interest" description="Disordered" evidence="6">
    <location>
        <begin position="952"/>
        <end position="978"/>
    </location>
</feature>
<feature type="compositionally biased region" description="Low complexity" evidence="6">
    <location>
        <begin position="958"/>
        <end position="969"/>
    </location>
</feature>
<feature type="active site" description="Proton acceptor" evidence="4 5">
    <location>
        <position position="810"/>
    </location>
</feature>
<feature type="binding site" evidence="4">
    <location>
        <begin position="619"/>
        <end position="627"/>
    </location>
    <ligand>
        <name>ATP</name>
        <dbReference type="ChEBI" id="CHEBI:30616"/>
    </ligand>
</feature>
<feature type="binding site" evidence="4">
    <location>
        <position position="647"/>
    </location>
    <ligand>
        <name>ATP</name>
        <dbReference type="ChEBI" id="CHEBI:30616"/>
    </ligand>
</feature>
<feature type="modified residue" description="Phosphotyrosine; by autocatalysis" evidence="1">
    <location>
        <position position="841"/>
    </location>
</feature>
<feature type="modified residue" description="Phosphothreonine" evidence="7">
    <location>
        <position position="973"/>
    </location>
</feature>
<feature type="glycosylation site" description="N-linked (GlcNAc...) asparagine; by host" evidence="2">
    <location>
        <position position="79"/>
    </location>
</feature>
<feature type="glycosylation site" description="N-linked (GlcNAc...) asparagine; by host" evidence="2">
    <location>
        <position position="107"/>
    </location>
</feature>
<feature type="glycosylation site" description="N-linked (GlcNAc...) asparagine; by host" evidence="2">
    <location>
        <position position="128"/>
    </location>
</feature>
<feature type="glycosylation site" description="N-linked (GlcNAc...) asparagine; by host" evidence="2">
    <location>
        <position position="187"/>
    </location>
</feature>
<feature type="glycosylation site" description="N-linked (GlcNAc...) asparagine; by host" evidence="2">
    <location>
        <position position="309"/>
    </location>
</feature>
<feature type="glycosylation site" description="N-linked (GlcNAc...) asparagine; by host" evidence="2">
    <location>
        <position position="320"/>
    </location>
</feature>
<feature type="glycosylation site" description="N-linked (GlcNAc...) asparagine; by host" evidence="2">
    <location>
        <position position="336"/>
    </location>
</feature>
<feature type="glycosylation site" description="N-linked (GlcNAc...) asparagine; by host" evidence="2">
    <location>
        <position position="369"/>
    </location>
</feature>
<feature type="glycosylation site" description="N-linked (GlcNAc...) asparagine; by host" evidence="2">
    <location>
        <position position="444"/>
    </location>
</feature>
<feature type="glycosylation site" description="N-linked (GlcNAc...) asparagine; by host" evidence="2">
    <location>
        <position position="511"/>
    </location>
</feature>
<feature type="glycosylation site" description="N-linked (GlcNAc...) asparagine; by host" evidence="2">
    <location>
        <position position="524"/>
    </location>
</feature>
<feature type="disulfide bond" evidence="3">
    <location>
        <begin position="76"/>
        <end position="118"/>
    </location>
</feature>
<feature type="disulfide bond" evidence="3">
    <location>
        <begin position="161"/>
        <end position="211"/>
    </location>
</feature>
<feature type="disulfide bond" evidence="3">
    <location>
        <begin position="258"/>
        <end position="312"/>
    </location>
</feature>
<feature type="disulfide bond" evidence="3">
    <location>
        <begin position="451"/>
        <end position="516"/>
    </location>
</feature>
<feature type="sequence conflict" description="In Ref. 1; AAA43045." evidence="8" ref="1">
    <original>L</original>
    <variation>P</variation>
    <location>
        <position position="714"/>
    </location>
</feature>
<feature type="sequence conflict" description="In Ref. 1; AAA43045." evidence="8" ref="1">
    <original>QRTPPVAR</original>
    <variation>RGPPL</variation>
    <location>
        <begin position="971"/>
        <end position="978"/>
    </location>
</feature>
<keyword id="KW-0067">ATP-binding</keyword>
<keyword id="KW-1015">Disulfide bond</keyword>
<keyword id="KW-0325">Glycoprotein</keyword>
<keyword id="KW-0393">Immunoglobulin domain</keyword>
<keyword id="KW-0418">Kinase</keyword>
<keyword id="KW-0472">Membrane</keyword>
<keyword id="KW-0547">Nucleotide-binding</keyword>
<keyword id="KW-0553">Oncogene</keyword>
<keyword id="KW-0597">Phosphoprotein</keyword>
<keyword id="KW-0675">Receptor</keyword>
<keyword id="KW-0677">Repeat</keyword>
<keyword id="KW-0808">Transferase</keyword>
<keyword id="KW-0812">Transmembrane</keyword>
<keyword id="KW-1133">Transmembrane helix</keyword>
<keyword id="KW-0829">Tyrosine-protein kinase</keyword>
<organismHost>
    <name type="scientific">Felidae</name>
    <name type="common">cat family</name>
    <dbReference type="NCBI Taxonomy" id="9681"/>
</organismHost>
<protein>
    <recommendedName>
        <fullName>Tyrosine-protein kinase transforming protein fms</fullName>
        <ecNumber>2.7.10.1</ecNumber>
    </recommendedName>
</protein>
<organism>
    <name type="scientific">Feline sarcoma virus (strain McDonough)</name>
    <dbReference type="NCBI Taxonomy" id="11778"/>
    <lineage>
        <taxon>Viruses</taxon>
        <taxon>Riboviria</taxon>
        <taxon>Pararnavirae</taxon>
        <taxon>Artverviricota</taxon>
        <taxon>Revtraviricetes</taxon>
        <taxon>Ortervirales</taxon>
        <taxon>Retroviridae</taxon>
        <taxon>Orthoretrovirinae</taxon>
        <taxon>Gammaretrovirus</taxon>
        <taxon>Feline leukemia virus</taxon>
    </lineage>
</organism>
<proteinExistence type="evidence at protein level"/>
<reference key="1">
    <citation type="journal article" date="1984" name="Proc. Natl. Acad. Sci. U.S.A.">
        <title>Nucleotide sequence of the feline retroviral oncogene v-fms shows unexpected homology with oncogenes encoding tyrosine-specific protein kinases.</title>
        <authorList>
            <person name="Hampe A."/>
            <person name="Gobet M."/>
            <person name="Sherr C.J."/>
            <person name="Galibert F."/>
        </authorList>
    </citation>
    <scope>NUCLEOTIDE SEQUENCE [GENOMIC RNA]</scope>
</reference>
<reference key="2">
    <citation type="journal article" date="1991" name="J. Virol.">
        <title>Reassessment of the v-fms sequence: threonine phosphorylation of the COOH-terminal domain.</title>
        <authorList>
            <person name="Smola U."/>
            <person name="Hennig D."/>
            <person name="Hadwiger-Fangmeier A."/>
            <person name="Schuetz B."/>
            <person name="Pfaff E."/>
            <person name="Niemann H."/>
            <person name="Tamura T."/>
        </authorList>
    </citation>
    <scope>NUCLEOTIDE SEQUENCE [GENOMIC DNA]</scope>
    <scope>SEQUENCE REVISION</scope>
    <scope>PHOSPHORYLATION AT THR-973</scope>
</reference>
<evidence type="ECO:0000250" key="1"/>
<evidence type="ECO:0000255" key="2"/>
<evidence type="ECO:0000255" key="3">
    <source>
        <dbReference type="PROSITE-ProRule" id="PRU00114"/>
    </source>
</evidence>
<evidence type="ECO:0000255" key="4">
    <source>
        <dbReference type="PROSITE-ProRule" id="PRU00159"/>
    </source>
</evidence>
<evidence type="ECO:0000255" key="5">
    <source>
        <dbReference type="PROSITE-ProRule" id="PRU10028"/>
    </source>
</evidence>
<evidence type="ECO:0000256" key="6">
    <source>
        <dbReference type="SAM" id="MobiDB-lite"/>
    </source>
</evidence>
<evidence type="ECO:0000269" key="7">
    <source>
    </source>
</evidence>
<evidence type="ECO:0000305" key="8"/>
<dbReference type="EC" id="2.7.10.1"/>
<dbReference type="EMBL" id="K01643">
    <property type="protein sequence ID" value="AAA43045.1"/>
    <property type="molecule type" value="Genomic_RNA"/>
</dbReference>
<dbReference type="EMBL" id="S59588">
    <property type="protein sequence ID" value="AAB20028.1"/>
    <property type="molecule type" value="Genomic_DNA"/>
</dbReference>
<dbReference type="PIR" id="A00654">
    <property type="entry name" value="TVMVMD"/>
</dbReference>
<dbReference type="SMR" id="P00545"/>
<dbReference type="GlyCosmos" id="P00545">
    <property type="glycosylation" value="11 sites, No reported glycans"/>
</dbReference>
<dbReference type="iPTMnet" id="P00545"/>
<dbReference type="BRENDA" id="2.7.10.2">
    <property type="organism ID" value="2234"/>
</dbReference>
<dbReference type="GO" id="GO:1990682">
    <property type="term" value="C:CSF1-CSF1R complex"/>
    <property type="evidence" value="ECO:0007669"/>
    <property type="project" value="TreeGrafter"/>
</dbReference>
<dbReference type="GO" id="GO:0005886">
    <property type="term" value="C:plasma membrane"/>
    <property type="evidence" value="ECO:0007669"/>
    <property type="project" value="TreeGrafter"/>
</dbReference>
<dbReference type="GO" id="GO:0043235">
    <property type="term" value="C:receptor complex"/>
    <property type="evidence" value="ECO:0007669"/>
    <property type="project" value="TreeGrafter"/>
</dbReference>
<dbReference type="GO" id="GO:0005524">
    <property type="term" value="F:ATP binding"/>
    <property type="evidence" value="ECO:0007669"/>
    <property type="project" value="UniProtKB-KW"/>
</dbReference>
<dbReference type="GO" id="GO:0019955">
    <property type="term" value="F:cytokine binding"/>
    <property type="evidence" value="ECO:0007669"/>
    <property type="project" value="InterPro"/>
</dbReference>
<dbReference type="GO" id="GO:0019838">
    <property type="term" value="F:growth factor binding"/>
    <property type="evidence" value="ECO:0007669"/>
    <property type="project" value="TreeGrafter"/>
</dbReference>
<dbReference type="GO" id="GO:0005011">
    <property type="term" value="F:macrophage colony-stimulating factor receptor activity"/>
    <property type="evidence" value="ECO:0007669"/>
    <property type="project" value="TreeGrafter"/>
</dbReference>
<dbReference type="GO" id="GO:0007169">
    <property type="term" value="P:cell surface receptor protein tyrosine kinase signaling pathway"/>
    <property type="evidence" value="ECO:0007669"/>
    <property type="project" value="InterPro"/>
</dbReference>
<dbReference type="GO" id="GO:0030335">
    <property type="term" value="P:positive regulation of cell migration"/>
    <property type="evidence" value="ECO:0007669"/>
    <property type="project" value="TreeGrafter"/>
</dbReference>
<dbReference type="GO" id="GO:0043408">
    <property type="term" value="P:regulation of MAPK cascade"/>
    <property type="evidence" value="ECO:0007669"/>
    <property type="project" value="TreeGrafter"/>
</dbReference>
<dbReference type="CDD" id="cd00096">
    <property type="entry name" value="Ig"/>
    <property type="match status" value="1"/>
</dbReference>
<dbReference type="CDD" id="cd20936">
    <property type="entry name" value="IgI_3_CSF-1R"/>
    <property type="match status" value="1"/>
</dbReference>
<dbReference type="FunFam" id="2.60.40.10:FF:001029">
    <property type="entry name" value="Macrophage colony-stimulating factor 1 receptor"/>
    <property type="match status" value="1"/>
</dbReference>
<dbReference type="FunFam" id="2.60.40.10:FF:001088">
    <property type="entry name" value="Macrophage colony-stimulating factor 1 receptor"/>
    <property type="match status" value="1"/>
</dbReference>
<dbReference type="FunFam" id="2.60.40.10:FF:001101">
    <property type="entry name" value="Macrophage colony-stimulating factor 1 receptor"/>
    <property type="match status" value="1"/>
</dbReference>
<dbReference type="FunFam" id="2.60.40.10:FF:001160">
    <property type="entry name" value="Macrophage colony-stimulating factor 1 receptor"/>
    <property type="match status" value="1"/>
</dbReference>
<dbReference type="FunFam" id="2.60.40.10:FF:001169">
    <property type="entry name" value="Macrophage colony-stimulating factor 1 receptor"/>
    <property type="match status" value="1"/>
</dbReference>
<dbReference type="FunFam" id="1.10.510.10:FF:000177">
    <property type="entry name" value="Mast/stem cell growth factor receptor"/>
    <property type="match status" value="1"/>
</dbReference>
<dbReference type="FunFam" id="3.30.200.20:FF:000025">
    <property type="entry name" value="Platelet-derived growth factor receptor alpha"/>
    <property type="match status" value="1"/>
</dbReference>
<dbReference type="Gene3D" id="2.60.40.10">
    <property type="entry name" value="Immunoglobulins"/>
    <property type="match status" value="5"/>
</dbReference>
<dbReference type="Gene3D" id="3.30.200.20">
    <property type="entry name" value="Phosphorylase Kinase, domain 1"/>
    <property type="match status" value="1"/>
</dbReference>
<dbReference type="Gene3D" id="1.10.510.10">
    <property type="entry name" value="Transferase(Phosphotransferase) domain 1"/>
    <property type="match status" value="1"/>
</dbReference>
<dbReference type="InterPro" id="IPR030658">
    <property type="entry name" value="CSF-1_receptor"/>
</dbReference>
<dbReference type="InterPro" id="IPR007110">
    <property type="entry name" value="Ig-like_dom"/>
</dbReference>
<dbReference type="InterPro" id="IPR036179">
    <property type="entry name" value="Ig-like_dom_sf"/>
</dbReference>
<dbReference type="InterPro" id="IPR013783">
    <property type="entry name" value="Ig-like_fold"/>
</dbReference>
<dbReference type="InterPro" id="IPR003599">
    <property type="entry name" value="Ig_sub"/>
</dbReference>
<dbReference type="InterPro" id="IPR003598">
    <property type="entry name" value="Ig_sub2"/>
</dbReference>
<dbReference type="InterPro" id="IPR013151">
    <property type="entry name" value="Immunoglobulin_dom"/>
</dbReference>
<dbReference type="InterPro" id="IPR011009">
    <property type="entry name" value="Kinase-like_dom_sf"/>
</dbReference>
<dbReference type="InterPro" id="IPR000719">
    <property type="entry name" value="Prot_kinase_dom"/>
</dbReference>
<dbReference type="InterPro" id="IPR017441">
    <property type="entry name" value="Protein_kinase_ATP_BS"/>
</dbReference>
<dbReference type="InterPro" id="IPR050122">
    <property type="entry name" value="RTK"/>
</dbReference>
<dbReference type="InterPro" id="IPR001245">
    <property type="entry name" value="Ser-Thr/Tyr_kinase_cat_dom"/>
</dbReference>
<dbReference type="InterPro" id="IPR008266">
    <property type="entry name" value="Tyr_kinase_AS"/>
</dbReference>
<dbReference type="InterPro" id="IPR020635">
    <property type="entry name" value="Tyr_kinase_cat_dom"/>
</dbReference>
<dbReference type="InterPro" id="IPR001824">
    <property type="entry name" value="Tyr_kinase_rcpt_3_CS"/>
</dbReference>
<dbReference type="PANTHER" id="PTHR24416:SF47">
    <property type="entry name" value="MACROPHAGE COLONY-STIMULATING FACTOR 1 RECEPTOR"/>
    <property type="match status" value="1"/>
</dbReference>
<dbReference type="PANTHER" id="PTHR24416">
    <property type="entry name" value="TYROSINE-PROTEIN KINASE RECEPTOR"/>
    <property type="match status" value="1"/>
</dbReference>
<dbReference type="Pfam" id="PF00047">
    <property type="entry name" value="ig"/>
    <property type="match status" value="1"/>
</dbReference>
<dbReference type="Pfam" id="PF25305">
    <property type="entry name" value="Ig_PDGFR_d4"/>
    <property type="match status" value="1"/>
</dbReference>
<dbReference type="Pfam" id="PF07714">
    <property type="entry name" value="PK_Tyr_Ser-Thr"/>
    <property type="match status" value="1"/>
</dbReference>
<dbReference type="PIRSF" id="PIRSF500947">
    <property type="entry name" value="CSF-1_receptor"/>
    <property type="match status" value="1"/>
</dbReference>
<dbReference type="PIRSF" id="PIRSF000615">
    <property type="entry name" value="TyrPK_CSF1-R"/>
    <property type="match status" value="1"/>
</dbReference>
<dbReference type="SMART" id="SM00409">
    <property type="entry name" value="IG"/>
    <property type="match status" value="4"/>
</dbReference>
<dbReference type="SMART" id="SM00408">
    <property type="entry name" value="IGc2"/>
    <property type="match status" value="4"/>
</dbReference>
<dbReference type="SMART" id="SM00219">
    <property type="entry name" value="TyrKc"/>
    <property type="match status" value="1"/>
</dbReference>
<dbReference type="SUPFAM" id="SSF48726">
    <property type="entry name" value="Immunoglobulin"/>
    <property type="match status" value="5"/>
</dbReference>
<dbReference type="SUPFAM" id="SSF56112">
    <property type="entry name" value="Protein kinase-like (PK-like)"/>
    <property type="match status" value="1"/>
</dbReference>
<dbReference type="PROSITE" id="PS50835">
    <property type="entry name" value="IG_LIKE"/>
    <property type="match status" value="3"/>
</dbReference>
<dbReference type="PROSITE" id="PS00107">
    <property type="entry name" value="PROTEIN_KINASE_ATP"/>
    <property type="match status" value="1"/>
</dbReference>
<dbReference type="PROSITE" id="PS50011">
    <property type="entry name" value="PROTEIN_KINASE_DOM"/>
    <property type="match status" value="1"/>
</dbReference>
<dbReference type="PROSITE" id="PS00109">
    <property type="entry name" value="PROTEIN_KINASE_TYR"/>
    <property type="match status" value="1"/>
</dbReference>
<dbReference type="PROSITE" id="PS00240">
    <property type="entry name" value="RECEPTOR_TYR_KIN_III"/>
    <property type="match status" value="1"/>
</dbReference>
<comment type="function">
    <text>Truncated version of the receptor for colony-stimulating factor 1 (CSF-1).</text>
</comment>
<comment type="catalytic activity">
    <reaction evidence="5">
        <text>L-tyrosyl-[protein] + ATP = O-phospho-L-tyrosyl-[protein] + ADP + H(+)</text>
        <dbReference type="Rhea" id="RHEA:10596"/>
        <dbReference type="Rhea" id="RHEA-COMP:10136"/>
        <dbReference type="Rhea" id="RHEA-COMP:20101"/>
        <dbReference type="ChEBI" id="CHEBI:15378"/>
        <dbReference type="ChEBI" id="CHEBI:30616"/>
        <dbReference type="ChEBI" id="CHEBI:46858"/>
        <dbReference type="ChEBI" id="CHEBI:61978"/>
        <dbReference type="ChEBI" id="CHEBI:456216"/>
        <dbReference type="EC" id="2.7.10.1"/>
    </reaction>
</comment>
<comment type="subcellular location">
    <subcellularLocation>
        <location>Membrane</location>
        <topology>Single-pass type I membrane protein</topology>
    </subcellularLocation>
</comment>
<comment type="miscellaneous">
    <text>This protein is synthesized as a Gag-Fms polyprotein.</text>
</comment>
<comment type="similarity">
    <text evidence="4">Belongs to the protein kinase superfamily. Tyr protein kinase family. CSF-1/PDGF receptor subfamily.</text>
</comment>
<gene>
    <name type="primary">V-FMS</name>
</gene>
<sequence length="978" mass="108492">RMPSGPGHYGASAETPGPRPPLCPASSCCLPTEAMGPRALLVLLMATAWHAQGVPVIQPSGPELVVEPGTTVTLRCVGNGSVEWDGPISPHWNLDLDPPSSILTTNNATFQNTGTYHCTEPGNPRGGNATIHLYVKDPARPWKVLAQEVTVLEGQDALLPCLLTDPALEAGVSLVRVRGRPVLRQTNYSFSPWHGFTIHKAKFIENHVYQCSARVDGRTVTSMGIWLKVQKDISGPATLTLEPAELVRIQGEAAQIVCSASNIDVNFDVSLRHGDTKLTISQQSDFHDNRYQKVLTLNLDHVSFQDAGNYSCTATNAWGNHSASMVFRVVESAYSNLTSEQSLLQEVTVGEKVDLQVKVEAYPGLESFNWTYLGPFSDYQDKLDFVTIKDTYRYTSTLSLPRLKRSESGRYSFLARNAGGQNALTFELTLRYPPEVRVTMTLINGSDTLLCEASGYPQPSVTWVQCRSHTDRCDESAGLVLEDSHSEVLSQVPFYEVIVHSLLAIGTLEHNRTYECRAFNSVGNSSQTFWPISIGAHTPLPDELLFTPVLLTCMSIMALLLLLLLLLLYKYKQKPKYQVRWKIIESYEGNSYTFIDPTQLPYNEKWEFPRNNLQFGKTLGTGAFGKVVEATAFGLGKEDAVLKVAVKMLKSTAHADEKEALMSELKIMSHLGQHENIVNLLGACTHGGPVLVITEYCCYGDLLNFLRRQAEAMLGPSLSVGQDPEAGAGYKNIHLEKKYVRRDSGFSSQGVDTYVEMRPVSTSSSNDSFSEEDLGKEDGRPLELRDLLHFSSQVAQGMAFLASKNCIHRDVAARNVLLTSGRVAKIGDFGLARDIMNDSNYIVKGNARLPVKWMAPESIFDCVYTVQSDVWSYGILLWEIFSLGLNPYPGILVNSKFYKLVKDGYQMAQPAFAPKNIYSIMQACWALEPTRRPTFQQICSLLQKQAQEDRRVPNYTNLPSSSSSRLLRPWQRTPPVAR</sequence>
<name>KFMS_FSVMD</name>